<name>IN80D_DICDI</name>
<feature type="chain" id="PRO_0000343654" description="INO80 complex subunit D">
    <location>
        <begin position="1"/>
        <end position="675"/>
    </location>
</feature>
<feature type="region of interest" description="Disordered" evidence="2">
    <location>
        <begin position="1"/>
        <end position="39"/>
    </location>
</feature>
<feature type="region of interest" description="Disordered" evidence="2">
    <location>
        <begin position="183"/>
        <end position="203"/>
    </location>
</feature>
<feature type="region of interest" description="Disordered" evidence="2">
    <location>
        <begin position="274"/>
        <end position="324"/>
    </location>
</feature>
<feature type="region of interest" description="Disordered" evidence="2">
    <location>
        <begin position="473"/>
        <end position="523"/>
    </location>
</feature>
<feature type="region of interest" description="Disordered" evidence="2">
    <location>
        <begin position="627"/>
        <end position="675"/>
    </location>
</feature>
<feature type="compositionally biased region" description="Low complexity" evidence="2">
    <location>
        <begin position="282"/>
        <end position="318"/>
    </location>
</feature>
<feature type="compositionally biased region" description="Low complexity" evidence="2">
    <location>
        <begin position="482"/>
        <end position="519"/>
    </location>
</feature>
<feature type="compositionally biased region" description="Low complexity" evidence="2">
    <location>
        <begin position="634"/>
        <end position="648"/>
    </location>
</feature>
<feature type="compositionally biased region" description="Basic and acidic residues" evidence="2">
    <location>
        <begin position="664"/>
        <end position="675"/>
    </location>
</feature>
<evidence type="ECO:0000250" key="1"/>
<evidence type="ECO:0000256" key="2">
    <source>
        <dbReference type="SAM" id="MobiDB-lite"/>
    </source>
</evidence>
<evidence type="ECO:0000305" key="3"/>
<gene>
    <name type="ORF">DDB_G0288447</name>
</gene>
<accession>Q54J07</accession>
<reference key="1">
    <citation type="journal article" date="2005" name="Nature">
        <title>The genome of the social amoeba Dictyostelium discoideum.</title>
        <authorList>
            <person name="Eichinger L."/>
            <person name="Pachebat J.A."/>
            <person name="Gloeckner G."/>
            <person name="Rajandream M.A."/>
            <person name="Sucgang R."/>
            <person name="Berriman M."/>
            <person name="Song J."/>
            <person name="Olsen R."/>
            <person name="Szafranski K."/>
            <person name="Xu Q."/>
            <person name="Tunggal B."/>
            <person name="Kummerfeld S."/>
            <person name="Madera M."/>
            <person name="Konfortov B.A."/>
            <person name="Rivero F."/>
            <person name="Bankier A.T."/>
            <person name="Lehmann R."/>
            <person name="Hamlin N."/>
            <person name="Davies R."/>
            <person name="Gaudet P."/>
            <person name="Fey P."/>
            <person name="Pilcher K."/>
            <person name="Chen G."/>
            <person name="Saunders D."/>
            <person name="Sodergren E.J."/>
            <person name="Davis P."/>
            <person name="Kerhornou A."/>
            <person name="Nie X."/>
            <person name="Hall N."/>
            <person name="Anjard C."/>
            <person name="Hemphill L."/>
            <person name="Bason N."/>
            <person name="Farbrother P."/>
            <person name="Desany B."/>
            <person name="Just E."/>
            <person name="Morio T."/>
            <person name="Rost R."/>
            <person name="Churcher C.M."/>
            <person name="Cooper J."/>
            <person name="Haydock S."/>
            <person name="van Driessche N."/>
            <person name="Cronin A."/>
            <person name="Goodhead I."/>
            <person name="Muzny D.M."/>
            <person name="Mourier T."/>
            <person name="Pain A."/>
            <person name="Lu M."/>
            <person name="Harper D."/>
            <person name="Lindsay R."/>
            <person name="Hauser H."/>
            <person name="James K.D."/>
            <person name="Quiles M."/>
            <person name="Madan Babu M."/>
            <person name="Saito T."/>
            <person name="Buchrieser C."/>
            <person name="Wardroper A."/>
            <person name="Felder M."/>
            <person name="Thangavelu M."/>
            <person name="Johnson D."/>
            <person name="Knights A."/>
            <person name="Loulseged H."/>
            <person name="Mungall K.L."/>
            <person name="Oliver K."/>
            <person name="Price C."/>
            <person name="Quail M.A."/>
            <person name="Urushihara H."/>
            <person name="Hernandez J."/>
            <person name="Rabbinowitsch E."/>
            <person name="Steffen D."/>
            <person name="Sanders M."/>
            <person name="Ma J."/>
            <person name="Kohara Y."/>
            <person name="Sharp S."/>
            <person name="Simmonds M.N."/>
            <person name="Spiegler S."/>
            <person name="Tivey A."/>
            <person name="Sugano S."/>
            <person name="White B."/>
            <person name="Walker D."/>
            <person name="Woodward J.R."/>
            <person name="Winckler T."/>
            <person name="Tanaka Y."/>
            <person name="Shaulsky G."/>
            <person name="Schleicher M."/>
            <person name="Weinstock G.M."/>
            <person name="Rosenthal A."/>
            <person name="Cox E.C."/>
            <person name="Chisholm R.L."/>
            <person name="Gibbs R.A."/>
            <person name="Loomis W.F."/>
            <person name="Platzer M."/>
            <person name="Kay R.R."/>
            <person name="Williams J.G."/>
            <person name="Dear P.H."/>
            <person name="Noegel A.A."/>
            <person name="Barrell B.G."/>
            <person name="Kuspa A."/>
        </authorList>
    </citation>
    <scope>NUCLEOTIDE SEQUENCE [LARGE SCALE GENOMIC DNA]</scope>
    <source>
        <strain>AX4</strain>
    </source>
</reference>
<organism>
    <name type="scientific">Dictyostelium discoideum</name>
    <name type="common">Social amoeba</name>
    <dbReference type="NCBI Taxonomy" id="44689"/>
    <lineage>
        <taxon>Eukaryota</taxon>
        <taxon>Amoebozoa</taxon>
        <taxon>Evosea</taxon>
        <taxon>Eumycetozoa</taxon>
        <taxon>Dictyostelia</taxon>
        <taxon>Dictyosteliales</taxon>
        <taxon>Dictyosteliaceae</taxon>
        <taxon>Dictyostelium</taxon>
    </lineage>
</organism>
<sequence length="675" mass="78233">MNNNSNNNNNNNIDQKNETTNEITNNTSNNNNIINNVNQNSTSITTSPILSPNNNINDNSMMDGKRLCASSKKVCSKRPMETYRFCIKHILEEPSAPFKQCEFISLKSQKQCTNPVSIKEKDPRFCVSHKHIIESTKKRVLESVVSSITSPSSSSPLPNASLIGSNSNITSPLQNLTTLNAFTGNNNNNTTTTTTTTTTNSTPSLNFDQQINIDIDNINGGDEPNLSLSASSFNFNIISNNDEEPKKKIMKILDRHGISQGRFYQDFKQNLKQLKQKHKQKQQLQNQKMFEQSQQQDQQQKPVQQPIQQQQQQDQLQIQEERQVSQQDEILEKQQQQQQQQQQQQQQQQQQQQQQQQQKKQQQELQIENNKENENINESNYFGEEFIEKDLEIELFKAMDDGHLSELCEDFDSDFYFASSSVLTDEELIQRRKIYISKLILLYKKQYNRFKERLRIIRRHYISTSLSLNQQNDSNKMEIDNNNDNNINNNNNNNNNNNNNNNNNNNNNNNNNNNNNNNNKLNKRKEEGNLCLSVNCKVKPMLLSKYCYSHILQDKDQKLFHECTYQLSANKKCGYPILKVQIPTLCREHLDIYETNNEIIKSLPKKQKQFIKQRIDIEKHNAPSTLVPVTQPINQNNQNNNNNNTNNSSKEESKDNNNNNNNKEILKDSDNTMIS</sequence>
<keyword id="KW-0227">DNA damage</keyword>
<keyword id="KW-0233">DNA recombination</keyword>
<keyword id="KW-0234">DNA repair</keyword>
<keyword id="KW-0539">Nucleus</keyword>
<keyword id="KW-1185">Reference proteome</keyword>
<keyword id="KW-0804">Transcription</keyword>
<keyword id="KW-0805">Transcription regulation</keyword>
<dbReference type="EMBL" id="AAFI02000111">
    <property type="protein sequence ID" value="EAL63249.1"/>
    <property type="molecule type" value="Genomic_DNA"/>
</dbReference>
<dbReference type="RefSeq" id="XP_636723.1">
    <property type="nucleotide sequence ID" value="XM_631631.1"/>
</dbReference>
<dbReference type="SMR" id="Q54J07"/>
<dbReference type="FunCoup" id="Q54J07">
    <property type="interactions" value="143"/>
</dbReference>
<dbReference type="PaxDb" id="44689-DDB0215968"/>
<dbReference type="EnsemblProtists" id="EAL63249">
    <property type="protein sequence ID" value="EAL63249"/>
    <property type="gene ID" value="DDB_G0288447"/>
</dbReference>
<dbReference type="GeneID" id="8626600"/>
<dbReference type="KEGG" id="ddi:DDB_G0288447"/>
<dbReference type="dictyBase" id="DDB_G0288447"/>
<dbReference type="VEuPathDB" id="AmoebaDB:DDB_G0288447"/>
<dbReference type="eggNOG" id="ENOG502QTMA">
    <property type="taxonomic scope" value="Eukaryota"/>
</dbReference>
<dbReference type="HOGENOM" id="CLU_407377_0_0_1"/>
<dbReference type="InParanoid" id="Q54J07"/>
<dbReference type="OMA" id="CERNIRR"/>
<dbReference type="PRO" id="PR:Q54J07"/>
<dbReference type="Proteomes" id="UP000002195">
    <property type="component" value="Chromosome 5"/>
</dbReference>
<dbReference type="GO" id="GO:0005634">
    <property type="term" value="C:nucleus"/>
    <property type="evidence" value="ECO:0000318"/>
    <property type="project" value="GO_Central"/>
</dbReference>
<dbReference type="GO" id="GO:0006310">
    <property type="term" value="P:DNA recombination"/>
    <property type="evidence" value="ECO:0007669"/>
    <property type="project" value="UniProtKB-KW"/>
</dbReference>
<dbReference type="GO" id="GO:0006281">
    <property type="term" value="P:DNA repair"/>
    <property type="evidence" value="ECO:0007669"/>
    <property type="project" value="UniProtKB-KW"/>
</dbReference>
<dbReference type="InterPro" id="IPR025927">
    <property type="entry name" value="Potential_DNA-bd"/>
</dbReference>
<dbReference type="PANTHER" id="PTHR16198">
    <property type="match status" value="1"/>
</dbReference>
<dbReference type="PANTHER" id="PTHR16198:SF2">
    <property type="entry name" value="INO80 COMPLEX SUBUNIT D"/>
    <property type="match status" value="1"/>
</dbReference>
<dbReference type="Pfam" id="PF13891">
    <property type="entry name" value="zf-C3Hc3H"/>
    <property type="match status" value="2"/>
</dbReference>
<protein>
    <recommendedName>
        <fullName>INO80 complex subunit D</fullName>
    </recommendedName>
</protein>
<comment type="function">
    <text evidence="1">Putative regulatory component of the chromatin remodeling INO80 complex which is involved in transcriptional regulation, DNA replication and probably DNA repair.</text>
</comment>
<comment type="subunit">
    <text evidence="1">Component of the chromatin-remodeling INO80 complex.</text>
</comment>
<comment type="subcellular location">
    <subcellularLocation>
        <location evidence="1">Nucleus</location>
    </subcellularLocation>
</comment>
<comment type="similarity">
    <text evidence="3">Belongs to the INO80D family.</text>
</comment>
<proteinExistence type="inferred from homology"/>